<organism>
    <name type="scientific">Homo sapiens</name>
    <name type="common">Human</name>
    <dbReference type="NCBI Taxonomy" id="9606"/>
    <lineage>
        <taxon>Eukaryota</taxon>
        <taxon>Metazoa</taxon>
        <taxon>Chordata</taxon>
        <taxon>Craniata</taxon>
        <taxon>Vertebrata</taxon>
        <taxon>Euteleostomi</taxon>
        <taxon>Mammalia</taxon>
        <taxon>Eutheria</taxon>
        <taxon>Euarchontoglires</taxon>
        <taxon>Primates</taxon>
        <taxon>Haplorrhini</taxon>
        <taxon>Catarrhini</taxon>
        <taxon>Hominidae</taxon>
        <taxon>Homo</taxon>
    </lineage>
</organism>
<proteinExistence type="evidence at protein level"/>
<name>PNMA3_HUMAN</name>
<keyword id="KW-0025">Alternative splicing</keyword>
<keyword id="KW-0479">Metal-binding</keyword>
<keyword id="KW-0539">Nucleus</keyword>
<keyword id="KW-1267">Proteomics identification</keyword>
<keyword id="KW-1185">Reference proteome</keyword>
<keyword id="KW-0825">Tumor antigen</keyword>
<keyword id="KW-0862">Zinc</keyword>
<keyword id="KW-0863">Zinc-finger</keyword>
<reference key="1">
    <citation type="journal article" date="2001" name="Ann. Neurol.">
        <title>Molecular and clinical diversity in paraneoplastic immunity to Ma proteins.</title>
        <authorList>
            <person name="Rosenfeld M.R."/>
            <person name="Eichen J.G."/>
            <person name="Wade D.F."/>
            <person name="Posner J.B."/>
            <person name="Dalmau J."/>
        </authorList>
    </citation>
    <scope>NUCLEOTIDE SEQUENCE [MRNA] (ISOFORM 1)</scope>
    <scope>TISSUE SPECIFICITY</scope>
    <source>
        <tissue>Brain stem</tissue>
    </source>
</reference>
<reference key="2">
    <citation type="journal article" date="2001" name="Genome Res.">
        <title>Towards a catalog of human genes and proteins: sequencing and analysis of 500 novel complete protein coding human cDNAs.</title>
        <authorList>
            <person name="Wiemann S."/>
            <person name="Weil B."/>
            <person name="Wellenreuther R."/>
            <person name="Gassenhuber J."/>
            <person name="Glassl S."/>
            <person name="Ansorge W."/>
            <person name="Boecher M."/>
            <person name="Bloecker H."/>
            <person name="Bauersachs S."/>
            <person name="Blum H."/>
            <person name="Lauber J."/>
            <person name="Duesterhoeft A."/>
            <person name="Beyer A."/>
            <person name="Koehrer K."/>
            <person name="Strack N."/>
            <person name="Mewes H.-W."/>
            <person name="Ottenwaelder B."/>
            <person name="Obermaier B."/>
            <person name="Tampe J."/>
            <person name="Heubner D."/>
            <person name="Wambutt R."/>
            <person name="Korn B."/>
            <person name="Klein M."/>
            <person name="Poustka A."/>
        </authorList>
    </citation>
    <scope>NUCLEOTIDE SEQUENCE [LARGE SCALE MRNA] (ISOFORM 2)</scope>
    <source>
        <tissue>Testis</tissue>
    </source>
</reference>
<reference key="3">
    <citation type="journal article" date="2005" name="Nature">
        <title>The DNA sequence of the human X chromosome.</title>
        <authorList>
            <person name="Ross M.T."/>
            <person name="Grafham D.V."/>
            <person name="Coffey A.J."/>
            <person name="Scherer S."/>
            <person name="McLay K."/>
            <person name="Muzny D."/>
            <person name="Platzer M."/>
            <person name="Howell G.R."/>
            <person name="Burrows C."/>
            <person name="Bird C.P."/>
            <person name="Frankish A."/>
            <person name="Lovell F.L."/>
            <person name="Howe K.L."/>
            <person name="Ashurst J.L."/>
            <person name="Fulton R.S."/>
            <person name="Sudbrak R."/>
            <person name="Wen G."/>
            <person name="Jones M.C."/>
            <person name="Hurles M.E."/>
            <person name="Andrews T.D."/>
            <person name="Scott C.E."/>
            <person name="Searle S."/>
            <person name="Ramser J."/>
            <person name="Whittaker A."/>
            <person name="Deadman R."/>
            <person name="Carter N.P."/>
            <person name="Hunt S.E."/>
            <person name="Chen R."/>
            <person name="Cree A."/>
            <person name="Gunaratne P."/>
            <person name="Havlak P."/>
            <person name="Hodgson A."/>
            <person name="Metzker M.L."/>
            <person name="Richards S."/>
            <person name="Scott G."/>
            <person name="Steffen D."/>
            <person name="Sodergren E."/>
            <person name="Wheeler D.A."/>
            <person name="Worley K.C."/>
            <person name="Ainscough R."/>
            <person name="Ambrose K.D."/>
            <person name="Ansari-Lari M.A."/>
            <person name="Aradhya S."/>
            <person name="Ashwell R.I."/>
            <person name="Babbage A.K."/>
            <person name="Bagguley C.L."/>
            <person name="Ballabio A."/>
            <person name="Banerjee R."/>
            <person name="Barker G.E."/>
            <person name="Barlow K.F."/>
            <person name="Barrett I.P."/>
            <person name="Bates K.N."/>
            <person name="Beare D.M."/>
            <person name="Beasley H."/>
            <person name="Beasley O."/>
            <person name="Beck A."/>
            <person name="Bethel G."/>
            <person name="Blechschmidt K."/>
            <person name="Brady N."/>
            <person name="Bray-Allen S."/>
            <person name="Bridgeman A.M."/>
            <person name="Brown A.J."/>
            <person name="Brown M.J."/>
            <person name="Bonnin D."/>
            <person name="Bruford E.A."/>
            <person name="Buhay C."/>
            <person name="Burch P."/>
            <person name="Burford D."/>
            <person name="Burgess J."/>
            <person name="Burrill W."/>
            <person name="Burton J."/>
            <person name="Bye J.M."/>
            <person name="Carder C."/>
            <person name="Carrel L."/>
            <person name="Chako J."/>
            <person name="Chapman J.C."/>
            <person name="Chavez D."/>
            <person name="Chen E."/>
            <person name="Chen G."/>
            <person name="Chen Y."/>
            <person name="Chen Z."/>
            <person name="Chinault C."/>
            <person name="Ciccodicola A."/>
            <person name="Clark S.Y."/>
            <person name="Clarke G."/>
            <person name="Clee C.M."/>
            <person name="Clegg S."/>
            <person name="Clerc-Blankenburg K."/>
            <person name="Clifford K."/>
            <person name="Cobley V."/>
            <person name="Cole C.G."/>
            <person name="Conquer J.S."/>
            <person name="Corby N."/>
            <person name="Connor R.E."/>
            <person name="David R."/>
            <person name="Davies J."/>
            <person name="Davis C."/>
            <person name="Davis J."/>
            <person name="Delgado O."/>
            <person name="Deshazo D."/>
            <person name="Dhami P."/>
            <person name="Ding Y."/>
            <person name="Dinh H."/>
            <person name="Dodsworth S."/>
            <person name="Draper H."/>
            <person name="Dugan-Rocha S."/>
            <person name="Dunham A."/>
            <person name="Dunn M."/>
            <person name="Durbin K.J."/>
            <person name="Dutta I."/>
            <person name="Eades T."/>
            <person name="Ellwood M."/>
            <person name="Emery-Cohen A."/>
            <person name="Errington H."/>
            <person name="Evans K.L."/>
            <person name="Faulkner L."/>
            <person name="Francis F."/>
            <person name="Frankland J."/>
            <person name="Fraser A.E."/>
            <person name="Galgoczy P."/>
            <person name="Gilbert J."/>
            <person name="Gill R."/>
            <person name="Gloeckner G."/>
            <person name="Gregory S.G."/>
            <person name="Gribble S."/>
            <person name="Griffiths C."/>
            <person name="Grocock R."/>
            <person name="Gu Y."/>
            <person name="Gwilliam R."/>
            <person name="Hamilton C."/>
            <person name="Hart E.A."/>
            <person name="Hawes A."/>
            <person name="Heath P.D."/>
            <person name="Heitmann K."/>
            <person name="Hennig S."/>
            <person name="Hernandez J."/>
            <person name="Hinzmann B."/>
            <person name="Ho S."/>
            <person name="Hoffs M."/>
            <person name="Howden P.J."/>
            <person name="Huckle E.J."/>
            <person name="Hume J."/>
            <person name="Hunt P.J."/>
            <person name="Hunt A.R."/>
            <person name="Isherwood J."/>
            <person name="Jacob L."/>
            <person name="Johnson D."/>
            <person name="Jones S."/>
            <person name="de Jong P.J."/>
            <person name="Joseph S.S."/>
            <person name="Keenan S."/>
            <person name="Kelly S."/>
            <person name="Kershaw J.K."/>
            <person name="Khan Z."/>
            <person name="Kioschis P."/>
            <person name="Klages S."/>
            <person name="Knights A.J."/>
            <person name="Kosiura A."/>
            <person name="Kovar-Smith C."/>
            <person name="Laird G.K."/>
            <person name="Langford C."/>
            <person name="Lawlor S."/>
            <person name="Leversha M."/>
            <person name="Lewis L."/>
            <person name="Liu W."/>
            <person name="Lloyd C."/>
            <person name="Lloyd D.M."/>
            <person name="Loulseged H."/>
            <person name="Loveland J.E."/>
            <person name="Lovell J.D."/>
            <person name="Lozado R."/>
            <person name="Lu J."/>
            <person name="Lyne R."/>
            <person name="Ma J."/>
            <person name="Maheshwari M."/>
            <person name="Matthews L.H."/>
            <person name="McDowall J."/>
            <person name="McLaren S."/>
            <person name="McMurray A."/>
            <person name="Meidl P."/>
            <person name="Meitinger T."/>
            <person name="Milne S."/>
            <person name="Miner G."/>
            <person name="Mistry S.L."/>
            <person name="Morgan M."/>
            <person name="Morris S."/>
            <person name="Mueller I."/>
            <person name="Mullikin J.C."/>
            <person name="Nguyen N."/>
            <person name="Nordsiek G."/>
            <person name="Nyakatura G."/>
            <person name="O'dell C.N."/>
            <person name="Okwuonu G."/>
            <person name="Palmer S."/>
            <person name="Pandian R."/>
            <person name="Parker D."/>
            <person name="Parrish J."/>
            <person name="Pasternak S."/>
            <person name="Patel D."/>
            <person name="Pearce A.V."/>
            <person name="Pearson D.M."/>
            <person name="Pelan S.E."/>
            <person name="Perez L."/>
            <person name="Porter K.M."/>
            <person name="Ramsey Y."/>
            <person name="Reichwald K."/>
            <person name="Rhodes S."/>
            <person name="Ridler K.A."/>
            <person name="Schlessinger D."/>
            <person name="Schueler M.G."/>
            <person name="Sehra H.K."/>
            <person name="Shaw-Smith C."/>
            <person name="Shen H."/>
            <person name="Sheridan E.M."/>
            <person name="Shownkeen R."/>
            <person name="Skuce C.D."/>
            <person name="Smith M.L."/>
            <person name="Sotheran E.C."/>
            <person name="Steingruber H.E."/>
            <person name="Steward C.A."/>
            <person name="Storey R."/>
            <person name="Swann R.M."/>
            <person name="Swarbreck D."/>
            <person name="Tabor P.E."/>
            <person name="Taudien S."/>
            <person name="Taylor T."/>
            <person name="Teague B."/>
            <person name="Thomas K."/>
            <person name="Thorpe A."/>
            <person name="Timms K."/>
            <person name="Tracey A."/>
            <person name="Trevanion S."/>
            <person name="Tromans A.C."/>
            <person name="d'Urso M."/>
            <person name="Verduzco D."/>
            <person name="Villasana D."/>
            <person name="Waldron L."/>
            <person name="Wall M."/>
            <person name="Wang Q."/>
            <person name="Warren J."/>
            <person name="Warry G.L."/>
            <person name="Wei X."/>
            <person name="West A."/>
            <person name="Whitehead S.L."/>
            <person name="Whiteley M.N."/>
            <person name="Wilkinson J.E."/>
            <person name="Willey D.L."/>
            <person name="Williams G."/>
            <person name="Williams L."/>
            <person name="Williamson A."/>
            <person name="Williamson H."/>
            <person name="Wilming L."/>
            <person name="Woodmansey R.L."/>
            <person name="Wray P.W."/>
            <person name="Yen J."/>
            <person name="Zhang J."/>
            <person name="Zhou J."/>
            <person name="Zoghbi H."/>
            <person name="Zorilla S."/>
            <person name="Buck D."/>
            <person name="Reinhardt R."/>
            <person name="Poustka A."/>
            <person name="Rosenthal A."/>
            <person name="Lehrach H."/>
            <person name="Meindl A."/>
            <person name="Minx P.J."/>
            <person name="Hillier L.W."/>
            <person name="Willard H.F."/>
            <person name="Wilson R.K."/>
            <person name="Waterston R.H."/>
            <person name="Rice C.M."/>
            <person name="Vaudin M."/>
            <person name="Coulson A."/>
            <person name="Nelson D.L."/>
            <person name="Weinstock G."/>
            <person name="Sulston J.E."/>
            <person name="Durbin R.M."/>
            <person name="Hubbard T."/>
            <person name="Gibbs R.A."/>
            <person name="Beck S."/>
            <person name="Rogers J."/>
            <person name="Bentley D.R."/>
        </authorList>
    </citation>
    <scope>NUCLEOTIDE SEQUENCE [LARGE SCALE GENOMIC DNA]</scope>
</reference>
<reference key="4">
    <citation type="submission" date="2005-09" db="EMBL/GenBank/DDBJ databases">
        <authorList>
            <person name="Mural R.J."/>
            <person name="Istrail S."/>
            <person name="Sutton G.G."/>
            <person name="Florea L."/>
            <person name="Halpern A.L."/>
            <person name="Mobarry C.M."/>
            <person name="Lippert R."/>
            <person name="Walenz B."/>
            <person name="Shatkay H."/>
            <person name="Dew I."/>
            <person name="Miller J.R."/>
            <person name="Flanigan M.J."/>
            <person name="Edwards N.J."/>
            <person name="Bolanos R."/>
            <person name="Fasulo D."/>
            <person name="Halldorsson B.V."/>
            <person name="Hannenhalli S."/>
            <person name="Turner R."/>
            <person name="Yooseph S."/>
            <person name="Lu F."/>
            <person name="Nusskern D.R."/>
            <person name="Shue B.C."/>
            <person name="Zheng X.H."/>
            <person name="Zhong F."/>
            <person name="Delcher A.L."/>
            <person name="Huson D.H."/>
            <person name="Kravitz S.A."/>
            <person name="Mouchard L."/>
            <person name="Reinert K."/>
            <person name="Remington K.A."/>
            <person name="Clark A.G."/>
            <person name="Waterman M.S."/>
            <person name="Eichler E.E."/>
            <person name="Adams M.D."/>
            <person name="Hunkapiller M.W."/>
            <person name="Myers E.W."/>
            <person name="Venter J.C."/>
        </authorList>
    </citation>
    <scope>NUCLEOTIDE SEQUENCE [LARGE SCALE GENOMIC DNA]</scope>
</reference>
<reference key="5">
    <citation type="journal article" date="2004" name="Genome Res.">
        <title>The status, quality, and expansion of the NIH full-length cDNA project: the Mammalian Gene Collection (MGC).</title>
        <authorList>
            <consortium name="The MGC Project Team"/>
        </authorList>
    </citation>
    <scope>NUCLEOTIDE SEQUENCE [LARGE SCALE MRNA] (ISOFORM 1)</scope>
    <source>
        <tissue>Brain</tissue>
    </source>
</reference>
<reference key="6">
    <citation type="journal article" date="2005" name="J. Neuroimmunol.">
        <title>The human PNMA family: novel neuronal proteins implicated in paraneoplastic neurological disease.</title>
        <authorList>
            <person name="Schueller M."/>
            <person name="Jenne D.E."/>
            <person name="Voltz R."/>
        </authorList>
    </citation>
    <scope>TISSUE SPECIFICITY</scope>
</reference>
<reference key="7">
    <citation type="journal article" date="2009" name="Cereb. Cortex">
        <title>Paraneoplastic antigen-like 5 gene (PNMA5) is preferentially expressed in the association areas in a primate specific manner.</title>
        <authorList>
            <person name="Takaji M."/>
            <person name="Komatsu Y."/>
            <person name="Watakabe A."/>
            <person name="Hashikawa T."/>
            <person name="Yamamori T."/>
        </authorList>
    </citation>
    <scope>TISSUE SPECIFICITY</scope>
</reference>
<accession>Q9UL41</accession>
<accession>D3DWT7</accession>
<accession>Q9H0A4</accession>
<feature type="chain" id="PRO_0000280215" description="Paraneoplastic antigen Ma3">
    <location>
        <begin position="1"/>
        <end position="463"/>
    </location>
</feature>
<feature type="zinc finger region" description="CCHC-type" evidence="2">
    <location>
        <begin position="412"/>
        <end position="429"/>
    </location>
</feature>
<feature type="region of interest" description="Disordered" evidence="3">
    <location>
        <begin position="363"/>
        <end position="410"/>
    </location>
</feature>
<feature type="region of interest" description="Disordered" evidence="3">
    <location>
        <begin position="440"/>
        <end position="463"/>
    </location>
</feature>
<feature type="compositionally biased region" description="Basic residues" evidence="3">
    <location>
        <begin position="383"/>
        <end position="396"/>
    </location>
</feature>
<feature type="splice variant" id="VSP_023571" description="In isoform 2." evidence="7">
    <original>VKQKKQAAVESGNGNWAWDKSHPKSKAK</original>
    <variation>AKETKEILEGGEREAQTNSR</variation>
    <location>
        <begin position="436"/>
        <end position="463"/>
    </location>
</feature>
<feature type="sequence variant" id="VAR_057701" description="In dbSNP:rs36042591.">
    <original>G</original>
    <variation>S</variation>
    <location>
        <position position="382"/>
    </location>
</feature>
<feature type="sequence variant" id="VAR_057702" description="In dbSNP:rs35603712.">
    <original>R</original>
    <variation>Q</variation>
    <location>
        <position position="386"/>
    </location>
</feature>
<feature type="sequence conflict" description="In Ref. 4; EAW72888/EAW72889." ref="4">
    <original>A</original>
    <variation>V</variation>
    <location>
        <position position="377"/>
    </location>
</feature>
<dbReference type="EMBL" id="AF083116">
    <property type="protein sequence ID" value="AAF05627.1"/>
    <property type="molecule type" value="mRNA"/>
</dbReference>
<dbReference type="EMBL" id="AL136878">
    <property type="protein sequence ID" value="CAB66812.1"/>
    <property type="molecule type" value="mRNA"/>
</dbReference>
<dbReference type="EMBL" id="AC243428">
    <property type="status" value="NOT_ANNOTATED_CDS"/>
    <property type="molecule type" value="Genomic_DNA"/>
</dbReference>
<dbReference type="EMBL" id="CH471172">
    <property type="protein sequence ID" value="EAW72888.1"/>
    <property type="molecule type" value="Genomic_DNA"/>
</dbReference>
<dbReference type="EMBL" id="CH471172">
    <property type="protein sequence ID" value="EAW72889.1"/>
    <property type="molecule type" value="Genomic_DNA"/>
</dbReference>
<dbReference type="EMBL" id="BC105096">
    <property type="protein sequence ID" value="AAI05097.1"/>
    <property type="molecule type" value="mRNA"/>
</dbReference>
<dbReference type="EMBL" id="BC105098">
    <property type="protein sequence ID" value="AAI05099.1"/>
    <property type="molecule type" value="mRNA"/>
</dbReference>
<dbReference type="CCDS" id="CCDS35435.2">
    <molecule id="Q9UL41-1"/>
</dbReference>
<dbReference type="CCDS" id="CCDS65344.1">
    <molecule id="Q9UL41-2"/>
</dbReference>
<dbReference type="RefSeq" id="NP_001269464.1">
    <molecule id="Q9UL41-2"/>
    <property type="nucleotide sequence ID" value="NM_001282535.2"/>
</dbReference>
<dbReference type="RefSeq" id="NP_037496.4">
    <molecule id="Q9UL41-1"/>
    <property type="nucleotide sequence ID" value="NM_013364.6"/>
</dbReference>
<dbReference type="SMR" id="Q9UL41"/>
<dbReference type="BioGRID" id="118981">
    <property type="interactions" value="21"/>
</dbReference>
<dbReference type="FunCoup" id="Q9UL41">
    <property type="interactions" value="97"/>
</dbReference>
<dbReference type="IntAct" id="Q9UL41">
    <property type="interactions" value="17"/>
</dbReference>
<dbReference type="STRING" id="9606.ENSP00000469445"/>
<dbReference type="iPTMnet" id="Q9UL41"/>
<dbReference type="PhosphoSitePlus" id="Q9UL41"/>
<dbReference type="BioMuta" id="PNMA3"/>
<dbReference type="DMDM" id="296452862"/>
<dbReference type="MassIVE" id="Q9UL41"/>
<dbReference type="PaxDb" id="9606-ENSP00000469445"/>
<dbReference type="PeptideAtlas" id="Q9UL41"/>
<dbReference type="ProteomicsDB" id="84942">
    <molecule id="Q9UL41-1"/>
</dbReference>
<dbReference type="ProteomicsDB" id="84943">
    <molecule id="Q9UL41-2"/>
</dbReference>
<dbReference type="Antibodypedia" id="45169">
    <property type="antibodies" value="195 antibodies from 13 providers"/>
</dbReference>
<dbReference type="DNASU" id="29944"/>
<dbReference type="Ensembl" id="ENST00000424805.1">
    <molecule id="Q9UL41-1"/>
    <property type="protein sequence ID" value="ENSP00000390576.1"/>
    <property type="gene ID" value="ENSG00000183837.10"/>
</dbReference>
<dbReference type="Ensembl" id="ENST00000593810.3">
    <molecule id="Q9UL41-1"/>
    <property type="protein sequence ID" value="ENSP00000469445.1"/>
    <property type="gene ID" value="ENSG00000183837.10"/>
</dbReference>
<dbReference type="Ensembl" id="ENST00000619635.1">
    <molecule id="Q9UL41-2"/>
    <property type="protein sequence ID" value="ENSP00000480719.1"/>
    <property type="gene ID" value="ENSG00000183837.10"/>
</dbReference>
<dbReference type="GeneID" id="29944"/>
<dbReference type="KEGG" id="hsa:29944"/>
<dbReference type="MANE-Select" id="ENST00000593810.3">
    <property type="protein sequence ID" value="ENSP00000469445.1"/>
    <property type="RefSeq nucleotide sequence ID" value="NM_013364.6"/>
    <property type="RefSeq protein sequence ID" value="NP_037496.4"/>
</dbReference>
<dbReference type="UCSC" id="uc033faq.1">
    <molecule id="Q9UL41-1"/>
    <property type="organism name" value="human"/>
</dbReference>
<dbReference type="AGR" id="HGNC:18742"/>
<dbReference type="CTD" id="29944"/>
<dbReference type="DisGeNET" id="29944"/>
<dbReference type="GeneCards" id="PNMA3"/>
<dbReference type="HGNC" id="HGNC:18742">
    <property type="gene designation" value="PNMA3"/>
</dbReference>
<dbReference type="HPA" id="ENSG00000183837">
    <property type="expression patterns" value="Tissue enhanced (brain, epididymis)"/>
</dbReference>
<dbReference type="MIM" id="300675">
    <property type="type" value="gene"/>
</dbReference>
<dbReference type="neXtProt" id="NX_Q9UL41"/>
<dbReference type="OpenTargets" id="ENSG00000183837"/>
<dbReference type="PharmGKB" id="PA38667"/>
<dbReference type="VEuPathDB" id="HostDB:ENSG00000183837"/>
<dbReference type="eggNOG" id="ENOG502SKT0">
    <property type="taxonomic scope" value="Eukaryota"/>
</dbReference>
<dbReference type="GeneTree" id="ENSGT01030000234522"/>
<dbReference type="HOGENOM" id="CLU_014694_0_1_1"/>
<dbReference type="InParanoid" id="Q9UL41"/>
<dbReference type="OMA" id="RGAQTNN"/>
<dbReference type="OrthoDB" id="115435at2759"/>
<dbReference type="PAN-GO" id="Q9UL41">
    <property type="GO annotations" value="0 GO annotations based on evolutionary models"/>
</dbReference>
<dbReference type="PhylomeDB" id="Q9UL41"/>
<dbReference type="TreeFam" id="TF335054"/>
<dbReference type="PathwayCommons" id="Q9UL41"/>
<dbReference type="SignaLink" id="Q9UL41"/>
<dbReference type="BioGRID-ORCS" id="29944">
    <property type="hits" value="6 hits in 767 CRISPR screens"/>
</dbReference>
<dbReference type="GenomeRNAi" id="29944"/>
<dbReference type="Pharos" id="Q9UL41">
    <property type="development level" value="Tbio"/>
</dbReference>
<dbReference type="PRO" id="PR:Q9UL41"/>
<dbReference type="Proteomes" id="UP000005640">
    <property type="component" value="Chromosome X"/>
</dbReference>
<dbReference type="RNAct" id="Q9UL41">
    <property type="molecule type" value="protein"/>
</dbReference>
<dbReference type="Bgee" id="ENSG00000183837">
    <property type="expression patterns" value="Expressed in right frontal lobe and 155 other cell types or tissues"/>
</dbReference>
<dbReference type="GO" id="GO:0005730">
    <property type="term" value="C:nucleolus"/>
    <property type="evidence" value="ECO:0007669"/>
    <property type="project" value="UniProtKB-SubCell"/>
</dbReference>
<dbReference type="GO" id="GO:0003676">
    <property type="term" value="F:nucleic acid binding"/>
    <property type="evidence" value="ECO:0007669"/>
    <property type="project" value="InterPro"/>
</dbReference>
<dbReference type="GO" id="GO:0008270">
    <property type="term" value="F:zinc ion binding"/>
    <property type="evidence" value="ECO:0007669"/>
    <property type="project" value="UniProtKB-KW"/>
</dbReference>
<dbReference type="GO" id="GO:0043065">
    <property type="term" value="P:positive regulation of apoptotic process"/>
    <property type="evidence" value="ECO:0000250"/>
    <property type="project" value="UniProtKB"/>
</dbReference>
<dbReference type="InterPro" id="IPR026523">
    <property type="entry name" value="PNMA"/>
</dbReference>
<dbReference type="InterPro" id="IPR048270">
    <property type="entry name" value="PNMA_C"/>
</dbReference>
<dbReference type="InterPro" id="IPR048271">
    <property type="entry name" value="PNMA_N"/>
</dbReference>
<dbReference type="InterPro" id="IPR001878">
    <property type="entry name" value="Znf_CCHC"/>
</dbReference>
<dbReference type="InterPro" id="IPR036875">
    <property type="entry name" value="Znf_CCHC_sf"/>
</dbReference>
<dbReference type="PANTHER" id="PTHR23095">
    <property type="entry name" value="PARANEOPLASTIC ANTIGEN"/>
    <property type="match status" value="1"/>
</dbReference>
<dbReference type="PANTHER" id="PTHR23095:SF22">
    <property type="entry name" value="PARANEOPLASTIC ANTIGEN MA3"/>
    <property type="match status" value="1"/>
</dbReference>
<dbReference type="Pfam" id="PF14893">
    <property type="entry name" value="PNMA"/>
    <property type="match status" value="1"/>
</dbReference>
<dbReference type="Pfam" id="PF20846">
    <property type="entry name" value="PNMA_N"/>
    <property type="match status" value="1"/>
</dbReference>
<dbReference type="SUPFAM" id="SSF57756">
    <property type="entry name" value="Retrovirus zinc finger-like domains"/>
    <property type="match status" value="1"/>
</dbReference>
<dbReference type="PROSITE" id="PS50158">
    <property type="entry name" value="ZF_CCHC"/>
    <property type="match status" value="1"/>
</dbReference>
<evidence type="ECO:0000250" key="1"/>
<evidence type="ECO:0000255" key="2">
    <source>
        <dbReference type="PROSITE-ProRule" id="PRU00047"/>
    </source>
</evidence>
<evidence type="ECO:0000256" key="3">
    <source>
        <dbReference type="SAM" id="MobiDB-lite"/>
    </source>
</evidence>
<evidence type="ECO:0000269" key="4">
    <source>
    </source>
</evidence>
<evidence type="ECO:0000269" key="5">
    <source>
    </source>
</evidence>
<evidence type="ECO:0000269" key="6">
    <source>
    </source>
</evidence>
<evidence type="ECO:0000303" key="7">
    <source>
    </source>
</evidence>
<evidence type="ECO:0000305" key="8"/>
<gene>
    <name type="primary">PNMA3</name>
    <name type="synonym">MA3</name>
</gene>
<protein>
    <recommendedName>
        <fullName>Paraneoplastic antigen Ma3</fullName>
    </recommendedName>
</protein>
<comment type="interaction">
    <interactant intactId="EBI-11278955">
        <id>Q9UL41</id>
    </interactant>
    <interactant intactId="EBI-12298187">
        <id>Q7Z2E3-7</id>
        <label>APTX</label>
    </interactant>
    <organismsDiffer>false</organismsDiffer>
    <experiments>3</experiments>
</comment>
<comment type="interaction">
    <interactant intactId="EBI-11278955">
        <id>Q9UL41</id>
    </interactant>
    <interactant intactId="EBI-741214">
        <id>Q9UFG5</id>
        <label>C19orf25</label>
    </interactant>
    <organismsDiffer>false</organismsDiffer>
    <experiments>3</experiments>
</comment>
<comment type="interaction">
    <interactant intactId="EBI-11278955">
        <id>Q9UL41</id>
    </interactant>
    <interactant intactId="EBI-741032">
        <id>Q8NE01</id>
        <label>CNNM3</label>
    </interactant>
    <organismsDiffer>false</organismsDiffer>
    <experiments>3</experiments>
</comment>
<comment type="interaction">
    <interactant intactId="EBI-11278955">
        <id>Q9UL41</id>
    </interactant>
    <interactant intactId="EBI-739832">
        <id>Q8TBB1</id>
        <label>LNX1</label>
    </interactant>
    <organismsDiffer>false</organismsDiffer>
    <experiments>3</experiments>
</comment>
<comment type="interaction">
    <interactant intactId="EBI-11278955">
        <id>Q9UL41</id>
    </interactant>
    <interactant intactId="EBI-14086479">
        <id>Q8IVT4</id>
        <label>MGC50722</label>
    </interactant>
    <organismsDiffer>false</organismsDiffer>
    <experiments>3</experiments>
</comment>
<comment type="interaction">
    <interactant intactId="EBI-11278955">
        <id>Q9UL41</id>
    </interactant>
    <interactant intactId="EBI-1567797">
        <id>Q8WWY3</id>
        <label>PRPF31</label>
    </interactant>
    <organismsDiffer>false</organismsDiffer>
    <experiments>3</experiments>
</comment>
<comment type="interaction">
    <interactant intactId="EBI-11278955">
        <id>Q9UL41</id>
    </interactant>
    <interactant intactId="EBI-2855824">
        <id>Q9UNE2</id>
        <label>RPH3AL</label>
    </interactant>
    <organismsDiffer>false</organismsDiffer>
    <experiments>3</experiments>
</comment>
<comment type="interaction">
    <interactant intactId="EBI-11278955">
        <id>Q9UL41</id>
    </interactant>
    <interactant intactId="EBI-13074156">
        <id>Q9NYZ2</id>
        <label>SLC25A37</label>
    </interactant>
    <organismsDiffer>false</organismsDiffer>
    <experiments>3</experiments>
</comment>
<comment type="interaction">
    <interactant intactId="EBI-11278955">
        <id>Q9UL41</id>
    </interactant>
    <interactant intactId="EBI-2872322">
        <id>Q9H0W8</id>
        <label>SMG9</label>
    </interactant>
    <organismsDiffer>false</organismsDiffer>
    <experiments>3</experiments>
</comment>
<comment type="interaction">
    <interactant intactId="EBI-11278955">
        <id>Q9UL41</id>
    </interactant>
    <interactant intactId="EBI-12140557">
        <id>Q6B0B8</id>
        <label>TIGD3</label>
    </interactant>
    <organismsDiffer>false</organismsDiffer>
    <experiments>3</experiments>
</comment>
<comment type="interaction">
    <interactant intactId="EBI-11278955">
        <id>Q9UL41</id>
    </interactant>
    <interactant intactId="EBI-947187">
        <id>Q9UHD9</id>
        <label>UBQLN2</label>
    </interactant>
    <organismsDiffer>false</organismsDiffer>
    <experiments>3</experiments>
</comment>
<comment type="interaction">
    <interactant intactId="EBI-11278955">
        <id>Q9UL41</id>
    </interactant>
    <interactant intactId="EBI-7781767">
        <id>Q9UFB7</id>
        <label>ZBTB47</label>
    </interactant>
    <organismsDiffer>false</organismsDiffer>
    <experiments>3</experiments>
</comment>
<comment type="subcellular location">
    <subcellularLocation>
        <location evidence="1">Nucleus</location>
        <location evidence="1">Nucleolus</location>
    </subcellularLocation>
</comment>
<comment type="alternative products">
    <event type="alternative splicing"/>
    <isoform>
        <id>Q9UL41-1</id>
        <name>1</name>
        <sequence type="displayed"/>
    </isoform>
    <isoform>
        <id>Q9UL41-2</id>
        <name>2</name>
        <sequence type="described" ref="VSP_023571"/>
    </isoform>
</comment>
<comment type="tissue specificity">
    <text evidence="4 5 6">Expressed at high levels in the brain and testis. Expressed at lower levels in the heart, trachea and kidney.</text>
</comment>
<comment type="miscellaneous">
    <text>Antibodies against PNMA3 are present in sera from patients suffering of paraneoplastic neurological disorders.</text>
</comment>
<comment type="similarity">
    <text evidence="8">Belongs to the PNMA family.</text>
</comment>
<sequence length="463" mass="52376">MPLTLLQDWCRGEHLNTRRCMLILGIPEDCGEDEFEETLQEACRHLGRYRVIGRMFRREENAQAILLELAQDIDYALLPREIPGKGGPWEVIVKPRNSDGEFLNRLNRFLEEERRTVSDMNRVLGSDTNCSAPRVTISPEFWTWAQTLGAAVQPLLEQMLYRELRVFSGNTISIPGALAFDAWLEHTTEMLQMWQVPEGEKRRRLMECLRGPALQVVSGLRASNASITVEECLAALQQVFGPVESHKIAQVKLCKAYQEAGEKVSSFVLRLEPLLQRAVENNVVSRRNVNQTRLKRVLSGATLPDKLRDKLKLMKQRRKPPGFLALVKLLREEEEWEATLGPDRESLEGLEVAPRPPARITGVGAVPLPASGNSFDARPSQGYRRRRGRGQHRRGGVARAGSRGSRKRKRHTFCYSCGEDGHIRVQCINPSNLLLVKQKKQAAVESGNGNWAWDKSHPKSKAK</sequence>